<protein>
    <recommendedName>
        <fullName evidence="1">D-aminoacyl-tRNA deacylase</fullName>
        <shortName evidence="1">DTD</shortName>
        <ecNumber evidence="1">3.1.1.96</ecNumber>
    </recommendedName>
    <alternativeName>
        <fullName evidence="1">Gly-tRNA(Ala) deacylase</fullName>
    </alternativeName>
</protein>
<keyword id="KW-0963">Cytoplasm</keyword>
<keyword id="KW-0378">Hydrolase</keyword>
<keyword id="KW-1185">Reference proteome</keyword>
<keyword id="KW-0694">RNA-binding</keyword>
<keyword id="KW-0820">tRNA-binding</keyword>
<comment type="function">
    <text evidence="1">An aminoacyl-tRNA editing enzyme that deacylates mischarged D-aminoacyl-tRNAs. Also deacylates mischarged glycyl-tRNA(Ala), protecting cells against glycine mischarging by AlaRS. Acts via tRNA-based rather than protein-based catalysis; rejects L-amino acids rather than detecting D-amino acids in the active site. By recycling D-aminoacyl-tRNA to D-amino acids and free tRNA molecules, this enzyme counteracts the toxicity associated with the formation of D-aminoacyl-tRNA entities in vivo and helps enforce protein L-homochirality.</text>
</comment>
<comment type="catalytic activity">
    <reaction evidence="1">
        <text>glycyl-tRNA(Ala) + H2O = tRNA(Ala) + glycine + H(+)</text>
        <dbReference type="Rhea" id="RHEA:53744"/>
        <dbReference type="Rhea" id="RHEA-COMP:9657"/>
        <dbReference type="Rhea" id="RHEA-COMP:13640"/>
        <dbReference type="ChEBI" id="CHEBI:15377"/>
        <dbReference type="ChEBI" id="CHEBI:15378"/>
        <dbReference type="ChEBI" id="CHEBI:57305"/>
        <dbReference type="ChEBI" id="CHEBI:78442"/>
        <dbReference type="ChEBI" id="CHEBI:78522"/>
        <dbReference type="EC" id="3.1.1.96"/>
    </reaction>
</comment>
<comment type="catalytic activity">
    <reaction evidence="1">
        <text>a D-aminoacyl-tRNA + H2O = a tRNA + a D-alpha-amino acid + H(+)</text>
        <dbReference type="Rhea" id="RHEA:13953"/>
        <dbReference type="Rhea" id="RHEA-COMP:10123"/>
        <dbReference type="Rhea" id="RHEA-COMP:10124"/>
        <dbReference type="ChEBI" id="CHEBI:15377"/>
        <dbReference type="ChEBI" id="CHEBI:15378"/>
        <dbReference type="ChEBI" id="CHEBI:59871"/>
        <dbReference type="ChEBI" id="CHEBI:78442"/>
        <dbReference type="ChEBI" id="CHEBI:79333"/>
        <dbReference type="EC" id="3.1.1.96"/>
    </reaction>
</comment>
<comment type="subunit">
    <text evidence="1">Homodimer.</text>
</comment>
<comment type="subcellular location">
    <subcellularLocation>
        <location evidence="1">Cytoplasm</location>
    </subcellularLocation>
</comment>
<comment type="domain">
    <text evidence="1">A Gly-cisPro motif from one monomer fits into the active site of the other monomer to allow specific chiral rejection of L-amino acids.</text>
</comment>
<comment type="similarity">
    <text evidence="1">Belongs to the DTD family.</text>
</comment>
<proteinExistence type="inferred from homology"/>
<accession>A0R080</accession>
<accession>I7G4T9</accession>
<sequence length="143" mass="15382">MRVLVQRVSRAQVTVDGEVVGAIDPQPQGLLALVGVTHDDDAAKAQRLAEKLWKLRILDDERSASDVAAPILVISQFTLYANTDKGRRPSWNAAAPGSVAEPLVTEFTEALRRLGATVETGVFGAHMEVELVNDGPVTVLLEL</sequence>
<evidence type="ECO:0000255" key="1">
    <source>
        <dbReference type="HAMAP-Rule" id="MF_00518"/>
    </source>
</evidence>
<reference key="1">
    <citation type="submission" date="2006-10" db="EMBL/GenBank/DDBJ databases">
        <authorList>
            <person name="Fleischmann R.D."/>
            <person name="Dodson R.J."/>
            <person name="Haft D.H."/>
            <person name="Merkel J.S."/>
            <person name="Nelson W.C."/>
            <person name="Fraser C.M."/>
        </authorList>
    </citation>
    <scope>NUCLEOTIDE SEQUENCE [LARGE SCALE GENOMIC DNA]</scope>
    <source>
        <strain>ATCC 700084 / mc(2)155</strain>
    </source>
</reference>
<reference key="2">
    <citation type="journal article" date="2007" name="Genome Biol.">
        <title>Interrupted coding sequences in Mycobacterium smegmatis: authentic mutations or sequencing errors?</title>
        <authorList>
            <person name="Deshayes C."/>
            <person name="Perrodou E."/>
            <person name="Gallien S."/>
            <person name="Euphrasie D."/>
            <person name="Schaeffer C."/>
            <person name="Van-Dorsselaer A."/>
            <person name="Poch O."/>
            <person name="Lecompte O."/>
            <person name="Reyrat J.-M."/>
        </authorList>
    </citation>
    <scope>NUCLEOTIDE SEQUENCE [LARGE SCALE GENOMIC DNA]</scope>
    <source>
        <strain>ATCC 700084 / mc(2)155</strain>
    </source>
</reference>
<reference key="3">
    <citation type="journal article" date="2009" name="Genome Res.">
        <title>Ortho-proteogenomics: multiple proteomes investigation through orthology and a new MS-based protocol.</title>
        <authorList>
            <person name="Gallien S."/>
            <person name="Perrodou E."/>
            <person name="Carapito C."/>
            <person name="Deshayes C."/>
            <person name="Reyrat J.-M."/>
            <person name="Van Dorsselaer A."/>
            <person name="Poch O."/>
            <person name="Schaeffer C."/>
            <person name="Lecompte O."/>
        </authorList>
    </citation>
    <scope>NUCLEOTIDE SEQUENCE [LARGE SCALE GENOMIC DNA]</scope>
    <source>
        <strain>ATCC 700084 / mc(2)155</strain>
    </source>
</reference>
<organism>
    <name type="scientific">Mycolicibacterium smegmatis (strain ATCC 700084 / mc(2)155)</name>
    <name type="common">Mycobacterium smegmatis</name>
    <dbReference type="NCBI Taxonomy" id="246196"/>
    <lineage>
        <taxon>Bacteria</taxon>
        <taxon>Bacillati</taxon>
        <taxon>Actinomycetota</taxon>
        <taxon>Actinomycetes</taxon>
        <taxon>Mycobacteriales</taxon>
        <taxon>Mycobacteriaceae</taxon>
        <taxon>Mycolicibacterium</taxon>
    </lineage>
</organism>
<dbReference type="EC" id="3.1.1.96" evidence="1"/>
<dbReference type="EMBL" id="CP000480">
    <property type="protein sequence ID" value="ABK74712.1"/>
    <property type="molecule type" value="Genomic_DNA"/>
</dbReference>
<dbReference type="EMBL" id="CP001663">
    <property type="protein sequence ID" value="AFP40647.1"/>
    <property type="molecule type" value="Genomic_DNA"/>
</dbReference>
<dbReference type="RefSeq" id="WP_011729707.1">
    <property type="nucleotide sequence ID" value="NZ_SIJM01000003.1"/>
</dbReference>
<dbReference type="RefSeq" id="YP_888568.1">
    <property type="nucleotide sequence ID" value="NC_008596.1"/>
</dbReference>
<dbReference type="SMR" id="A0R080"/>
<dbReference type="STRING" id="246196.MSMEG_4291"/>
<dbReference type="PaxDb" id="246196-MSMEI_4190"/>
<dbReference type="GeneID" id="93459009"/>
<dbReference type="KEGG" id="msb:LJ00_21270"/>
<dbReference type="KEGG" id="msg:MSMEI_4190"/>
<dbReference type="KEGG" id="msm:MSMEG_4291"/>
<dbReference type="PATRIC" id="fig|246196.19.peg.4211"/>
<dbReference type="eggNOG" id="COG1490">
    <property type="taxonomic scope" value="Bacteria"/>
</dbReference>
<dbReference type="OrthoDB" id="9801395at2"/>
<dbReference type="Proteomes" id="UP000000757">
    <property type="component" value="Chromosome"/>
</dbReference>
<dbReference type="Proteomes" id="UP000006158">
    <property type="component" value="Chromosome"/>
</dbReference>
<dbReference type="GO" id="GO:0005737">
    <property type="term" value="C:cytoplasm"/>
    <property type="evidence" value="ECO:0007669"/>
    <property type="project" value="UniProtKB-SubCell"/>
</dbReference>
<dbReference type="GO" id="GO:0051500">
    <property type="term" value="F:D-tyrosyl-tRNA(Tyr) deacylase activity"/>
    <property type="evidence" value="ECO:0007669"/>
    <property type="project" value="TreeGrafter"/>
</dbReference>
<dbReference type="GO" id="GO:0106026">
    <property type="term" value="F:Gly-tRNA(Ala) deacylase activity"/>
    <property type="evidence" value="ECO:0007669"/>
    <property type="project" value="UniProtKB-UniRule"/>
</dbReference>
<dbReference type="GO" id="GO:0043908">
    <property type="term" value="F:Ser(Gly)-tRNA(Ala) hydrolase activity"/>
    <property type="evidence" value="ECO:0007669"/>
    <property type="project" value="UniProtKB-UniRule"/>
</dbReference>
<dbReference type="GO" id="GO:0000049">
    <property type="term" value="F:tRNA binding"/>
    <property type="evidence" value="ECO:0007669"/>
    <property type="project" value="UniProtKB-UniRule"/>
</dbReference>
<dbReference type="GO" id="GO:0019478">
    <property type="term" value="P:D-amino acid catabolic process"/>
    <property type="evidence" value="ECO:0007669"/>
    <property type="project" value="UniProtKB-UniRule"/>
</dbReference>
<dbReference type="CDD" id="cd00563">
    <property type="entry name" value="Dtyr_deacylase"/>
    <property type="match status" value="1"/>
</dbReference>
<dbReference type="FunFam" id="3.50.80.10:FF:000002">
    <property type="entry name" value="D-aminoacyl-tRNA deacylase"/>
    <property type="match status" value="1"/>
</dbReference>
<dbReference type="Gene3D" id="3.50.80.10">
    <property type="entry name" value="D-tyrosyl-tRNA(Tyr) deacylase"/>
    <property type="match status" value="1"/>
</dbReference>
<dbReference type="HAMAP" id="MF_00518">
    <property type="entry name" value="Deacylase_Dtd"/>
    <property type="match status" value="1"/>
</dbReference>
<dbReference type="InterPro" id="IPR003732">
    <property type="entry name" value="Daa-tRNA_deacyls_DTD"/>
</dbReference>
<dbReference type="InterPro" id="IPR023509">
    <property type="entry name" value="DTD-like_sf"/>
</dbReference>
<dbReference type="NCBIfam" id="TIGR00256">
    <property type="entry name" value="D-aminoacyl-tRNA deacylase"/>
    <property type="match status" value="1"/>
</dbReference>
<dbReference type="PANTHER" id="PTHR10472:SF5">
    <property type="entry name" value="D-AMINOACYL-TRNA DEACYLASE 1"/>
    <property type="match status" value="1"/>
</dbReference>
<dbReference type="PANTHER" id="PTHR10472">
    <property type="entry name" value="D-TYROSYL-TRNA TYR DEACYLASE"/>
    <property type="match status" value="1"/>
</dbReference>
<dbReference type="Pfam" id="PF02580">
    <property type="entry name" value="Tyr_Deacylase"/>
    <property type="match status" value="1"/>
</dbReference>
<dbReference type="SUPFAM" id="SSF69500">
    <property type="entry name" value="DTD-like"/>
    <property type="match status" value="1"/>
</dbReference>
<name>DTD_MYCS2</name>
<gene>
    <name evidence="1" type="primary">dtd</name>
    <name type="ordered locus">MSMEG_4291</name>
    <name type="ordered locus">MSMEI_4190</name>
</gene>
<feature type="chain" id="PRO_1000050856" description="D-aminoacyl-tRNA deacylase">
    <location>
        <begin position="1"/>
        <end position="143"/>
    </location>
</feature>
<feature type="short sequence motif" description="Gly-cisPro motif, important for rejection of L-amino acids" evidence="1">
    <location>
        <begin position="135"/>
        <end position="136"/>
    </location>
</feature>